<evidence type="ECO:0000255" key="1">
    <source>
        <dbReference type="HAMAP-Rule" id="MF_01147"/>
    </source>
</evidence>
<accession>A5UDH1</accession>
<gene>
    <name evidence="1" type="primary">lgt</name>
    <name type="ordered locus">CGSHiEE_07495</name>
</gene>
<organism>
    <name type="scientific">Haemophilus influenzae (strain PittEE)</name>
    <dbReference type="NCBI Taxonomy" id="374930"/>
    <lineage>
        <taxon>Bacteria</taxon>
        <taxon>Pseudomonadati</taxon>
        <taxon>Pseudomonadota</taxon>
        <taxon>Gammaproteobacteria</taxon>
        <taxon>Pasteurellales</taxon>
        <taxon>Pasteurellaceae</taxon>
        <taxon>Haemophilus</taxon>
    </lineage>
</organism>
<reference key="1">
    <citation type="journal article" date="2007" name="Genome Biol.">
        <title>Characterization and modeling of the Haemophilus influenzae core and supragenomes based on the complete genomic sequences of Rd and 12 clinical nontypeable strains.</title>
        <authorList>
            <person name="Hogg J.S."/>
            <person name="Hu F.Z."/>
            <person name="Janto B."/>
            <person name="Boissy R."/>
            <person name="Hayes J."/>
            <person name="Keefe R."/>
            <person name="Post J.C."/>
            <person name="Ehrlich G.D."/>
        </authorList>
    </citation>
    <scope>NUCLEOTIDE SEQUENCE [LARGE SCALE GENOMIC DNA]</scope>
    <source>
        <strain>PittEE</strain>
    </source>
</reference>
<sequence length="268" mass="30540">MNSNYLLLPHFDPSIFTLGDSNIGLRWYGLMYLLGFVFARWLAVRRANRPNSGWTVDQVDSLLFNGFMGVFIGGRVGDVFFYNLDHFLQEPLYLFRVWEGGMSFHGGLIGVIVAMIWTSYSQKRNFWQTADFVAPLIPFGLGLGRIGNFINLELWGRETNVPWAMIFPNDPLLLPRHPSQLYEAFLEGLVLFAILNIFIKKPRPMASVAGLFLIGYGVFRFIVEYVREPEVENFFGIITRGQALCLPMIIGGAFIMAWAYSRKSAVIK</sequence>
<name>LGT_HAEIE</name>
<proteinExistence type="inferred from homology"/>
<keyword id="KW-0997">Cell inner membrane</keyword>
<keyword id="KW-1003">Cell membrane</keyword>
<keyword id="KW-0472">Membrane</keyword>
<keyword id="KW-0808">Transferase</keyword>
<keyword id="KW-0812">Transmembrane</keyword>
<keyword id="KW-1133">Transmembrane helix</keyword>
<protein>
    <recommendedName>
        <fullName evidence="1">Phosphatidylglycerol--prolipoprotein diacylglyceryl transferase</fullName>
        <ecNumber evidence="1">2.5.1.145</ecNumber>
    </recommendedName>
</protein>
<comment type="function">
    <text evidence="1">Catalyzes the transfer of the diacylglyceryl group from phosphatidylglycerol to the sulfhydryl group of the N-terminal cysteine of a prolipoprotein, the first step in the formation of mature lipoproteins.</text>
</comment>
<comment type="catalytic activity">
    <reaction evidence="1">
        <text>L-cysteinyl-[prolipoprotein] + a 1,2-diacyl-sn-glycero-3-phospho-(1'-sn-glycerol) = an S-1,2-diacyl-sn-glyceryl-L-cysteinyl-[prolipoprotein] + sn-glycerol 1-phosphate + H(+)</text>
        <dbReference type="Rhea" id="RHEA:56712"/>
        <dbReference type="Rhea" id="RHEA-COMP:14679"/>
        <dbReference type="Rhea" id="RHEA-COMP:14680"/>
        <dbReference type="ChEBI" id="CHEBI:15378"/>
        <dbReference type="ChEBI" id="CHEBI:29950"/>
        <dbReference type="ChEBI" id="CHEBI:57685"/>
        <dbReference type="ChEBI" id="CHEBI:64716"/>
        <dbReference type="ChEBI" id="CHEBI:140658"/>
        <dbReference type="EC" id="2.5.1.145"/>
    </reaction>
</comment>
<comment type="pathway">
    <text evidence="1">Protein modification; lipoprotein biosynthesis (diacylglyceryl transfer).</text>
</comment>
<comment type="subcellular location">
    <subcellularLocation>
        <location evidence="1">Cell inner membrane</location>
        <topology evidence="1">Multi-pass membrane protein</topology>
    </subcellularLocation>
</comment>
<comment type="similarity">
    <text evidence="1">Belongs to the Lgt family.</text>
</comment>
<feature type="chain" id="PRO_1000053439" description="Phosphatidylglycerol--prolipoprotein diacylglyceryl transferase">
    <location>
        <begin position="1"/>
        <end position="268"/>
    </location>
</feature>
<feature type="transmembrane region" description="Helical" evidence="1">
    <location>
        <begin position="23"/>
        <end position="43"/>
    </location>
</feature>
<feature type="transmembrane region" description="Helical" evidence="1">
    <location>
        <begin position="62"/>
        <end position="82"/>
    </location>
</feature>
<feature type="transmembrane region" description="Helical" evidence="1">
    <location>
        <begin position="97"/>
        <end position="117"/>
    </location>
</feature>
<feature type="transmembrane region" description="Helical" evidence="1">
    <location>
        <begin position="132"/>
        <end position="152"/>
    </location>
</feature>
<feature type="transmembrane region" description="Helical" evidence="1">
    <location>
        <begin position="179"/>
        <end position="199"/>
    </location>
</feature>
<feature type="transmembrane region" description="Helical" evidence="1">
    <location>
        <begin position="206"/>
        <end position="226"/>
    </location>
</feature>
<feature type="transmembrane region" description="Helical" evidence="1">
    <location>
        <begin position="241"/>
        <end position="261"/>
    </location>
</feature>
<feature type="binding site" evidence="1">
    <location>
        <position position="145"/>
    </location>
    <ligand>
        <name>a 1,2-diacyl-sn-glycero-3-phospho-(1'-sn-glycerol)</name>
        <dbReference type="ChEBI" id="CHEBI:64716"/>
    </ligand>
</feature>
<dbReference type="EC" id="2.5.1.145" evidence="1"/>
<dbReference type="EMBL" id="CP000671">
    <property type="protein sequence ID" value="ABQ98822.1"/>
    <property type="molecule type" value="Genomic_DNA"/>
</dbReference>
<dbReference type="SMR" id="A5UDH1"/>
<dbReference type="KEGG" id="hip:CGSHiEE_07495"/>
<dbReference type="HOGENOM" id="CLU_013386_1_0_6"/>
<dbReference type="UniPathway" id="UPA00664"/>
<dbReference type="GO" id="GO:0005886">
    <property type="term" value="C:plasma membrane"/>
    <property type="evidence" value="ECO:0007669"/>
    <property type="project" value="UniProtKB-SubCell"/>
</dbReference>
<dbReference type="GO" id="GO:0008961">
    <property type="term" value="F:phosphatidylglycerol-prolipoprotein diacylglyceryl transferase activity"/>
    <property type="evidence" value="ECO:0007669"/>
    <property type="project" value="UniProtKB-UniRule"/>
</dbReference>
<dbReference type="GO" id="GO:0042158">
    <property type="term" value="P:lipoprotein biosynthetic process"/>
    <property type="evidence" value="ECO:0007669"/>
    <property type="project" value="UniProtKB-UniRule"/>
</dbReference>
<dbReference type="HAMAP" id="MF_01147">
    <property type="entry name" value="Lgt"/>
    <property type="match status" value="1"/>
</dbReference>
<dbReference type="InterPro" id="IPR001640">
    <property type="entry name" value="Lgt"/>
</dbReference>
<dbReference type="NCBIfam" id="TIGR00544">
    <property type="entry name" value="lgt"/>
    <property type="match status" value="1"/>
</dbReference>
<dbReference type="PANTHER" id="PTHR30589:SF0">
    <property type="entry name" value="PHOSPHATIDYLGLYCEROL--PROLIPOPROTEIN DIACYLGLYCERYL TRANSFERASE"/>
    <property type="match status" value="1"/>
</dbReference>
<dbReference type="PANTHER" id="PTHR30589">
    <property type="entry name" value="PROLIPOPROTEIN DIACYLGLYCERYL TRANSFERASE"/>
    <property type="match status" value="1"/>
</dbReference>
<dbReference type="Pfam" id="PF01790">
    <property type="entry name" value="LGT"/>
    <property type="match status" value="1"/>
</dbReference>
<dbReference type="PROSITE" id="PS01311">
    <property type="entry name" value="LGT"/>
    <property type="match status" value="1"/>
</dbReference>